<gene>
    <name evidence="1" type="primary">panD2</name>
    <name type="ordered locus">mll9093</name>
</gene>
<sequence length="150" mass="16432">MRKIVAGKLHGIHVTEANLDYHGSITLDPDHCEEAGILPMEFVEIWNKNSGARISTYVILGERGSRCCILNGAAARTCQPGDQIIVCNSIYLDEAHITSLKPRIVTFDQDNNILDRLSYSVDLDPDGRYCFSILDEADEALAIPALVSGA</sequence>
<comment type="function">
    <text evidence="1">Catalyzes the pyruvoyl-dependent decarboxylation of aspartate to produce beta-alanine.</text>
</comment>
<comment type="catalytic activity">
    <reaction evidence="1">
        <text>L-aspartate + H(+) = beta-alanine + CO2</text>
        <dbReference type="Rhea" id="RHEA:19497"/>
        <dbReference type="ChEBI" id="CHEBI:15378"/>
        <dbReference type="ChEBI" id="CHEBI:16526"/>
        <dbReference type="ChEBI" id="CHEBI:29991"/>
        <dbReference type="ChEBI" id="CHEBI:57966"/>
        <dbReference type="EC" id="4.1.1.11"/>
    </reaction>
</comment>
<comment type="cofactor">
    <cofactor evidence="1">
        <name>pyruvate</name>
        <dbReference type="ChEBI" id="CHEBI:15361"/>
    </cofactor>
    <text evidence="1">Binds 1 pyruvoyl group covalently per subunit.</text>
</comment>
<comment type="pathway">
    <text evidence="1">Cofactor biosynthesis; (R)-pantothenate biosynthesis; beta-alanine from L-aspartate: step 1/1.</text>
</comment>
<comment type="subunit">
    <text evidence="1">Heterooctamer of four alpha and four beta subunits.</text>
</comment>
<comment type="subcellular location">
    <subcellularLocation>
        <location evidence="1">Cytoplasm</location>
    </subcellularLocation>
</comment>
<comment type="PTM">
    <text evidence="1">Is synthesized initially as an inactive proenzyme, which is activated by self-cleavage at a specific serine bond to produce a beta-subunit with a hydroxyl group at its C-terminus and an alpha-subunit with a pyruvoyl group at its N-terminus.</text>
</comment>
<comment type="similarity">
    <text evidence="1">Belongs to the PanD family.</text>
</comment>
<geneLocation type="plasmid">
    <name>pMLa</name>
</geneLocation>
<accession>Q982G0</accession>
<feature type="chain" id="PRO_0000023145" description="Aspartate 1-decarboxylase beta chain" evidence="1">
    <location>
        <begin position="1"/>
        <end position="23"/>
    </location>
</feature>
<feature type="chain" id="PRO_0000023146" description="Aspartate 1-decarboxylase alpha chain" evidence="1">
    <location>
        <begin position="24"/>
        <end position="150"/>
    </location>
</feature>
<feature type="active site" description="Schiff-base intermediate with substrate; via pyruvic acid" evidence="1">
    <location>
        <position position="24"/>
    </location>
</feature>
<feature type="active site" description="Proton donor" evidence="1">
    <location>
        <position position="57"/>
    </location>
</feature>
<feature type="binding site" evidence="1">
    <location>
        <position position="56"/>
    </location>
    <ligand>
        <name>substrate</name>
    </ligand>
</feature>
<feature type="binding site" evidence="1">
    <location>
        <begin position="72"/>
        <end position="74"/>
    </location>
    <ligand>
        <name>substrate</name>
    </ligand>
</feature>
<feature type="modified residue" description="Pyruvic acid (Ser)" evidence="1">
    <location>
        <position position="24"/>
    </location>
</feature>
<keyword id="KW-0068">Autocatalytic cleavage</keyword>
<keyword id="KW-0963">Cytoplasm</keyword>
<keyword id="KW-0210">Decarboxylase</keyword>
<keyword id="KW-0456">Lyase</keyword>
<keyword id="KW-0566">Pantothenate biosynthesis</keyword>
<keyword id="KW-0614">Plasmid</keyword>
<keyword id="KW-0670">Pyruvate</keyword>
<keyword id="KW-0704">Schiff base</keyword>
<keyword id="KW-0865">Zymogen</keyword>
<proteinExistence type="inferred from homology"/>
<reference key="1">
    <citation type="journal article" date="2000" name="DNA Res.">
        <title>Complete genome structure of the nitrogen-fixing symbiotic bacterium Mesorhizobium loti.</title>
        <authorList>
            <person name="Kaneko T."/>
            <person name="Nakamura Y."/>
            <person name="Sato S."/>
            <person name="Asamizu E."/>
            <person name="Kato T."/>
            <person name="Sasamoto S."/>
            <person name="Watanabe A."/>
            <person name="Idesawa K."/>
            <person name="Ishikawa A."/>
            <person name="Kawashima K."/>
            <person name="Kimura T."/>
            <person name="Kishida Y."/>
            <person name="Kiyokawa C."/>
            <person name="Kohara M."/>
            <person name="Matsumoto M."/>
            <person name="Matsuno A."/>
            <person name="Mochizuki Y."/>
            <person name="Nakayama S."/>
            <person name="Nakazaki N."/>
            <person name="Shimpo S."/>
            <person name="Sugimoto M."/>
            <person name="Takeuchi C."/>
            <person name="Yamada M."/>
            <person name="Tabata S."/>
        </authorList>
    </citation>
    <scope>NUCLEOTIDE SEQUENCE [LARGE SCALE GENOMIC DNA]</scope>
    <source>
        <strain>LMG 29417 / CECT 9101 / MAFF 303099</strain>
    </source>
</reference>
<evidence type="ECO:0000255" key="1">
    <source>
        <dbReference type="HAMAP-Rule" id="MF_00446"/>
    </source>
</evidence>
<protein>
    <recommendedName>
        <fullName evidence="1">Aspartate 1-decarboxylase 2</fullName>
        <ecNumber evidence="1">4.1.1.11</ecNumber>
    </recommendedName>
    <alternativeName>
        <fullName evidence="1">Aspartate alpha-decarboxylase 2</fullName>
    </alternativeName>
    <component>
        <recommendedName>
            <fullName evidence="1">Aspartate 1-decarboxylase beta chain</fullName>
        </recommendedName>
    </component>
    <component>
        <recommendedName>
            <fullName evidence="1">Aspartate 1-decarboxylase alpha chain</fullName>
        </recommendedName>
    </component>
</protein>
<name>PAND2_RHILO</name>
<organism>
    <name type="scientific">Mesorhizobium japonicum (strain LMG 29417 / CECT 9101 / MAFF 303099)</name>
    <name type="common">Mesorhizobium loti (strain MAFF 303099)</name>
    <dbReference type="NCBI Taxonomy" id="266835"/>
    <lineage>
        <taxon>Bacteria</taxon>
        <taxon>Pseudomonadati</taxon>
        <taxon>Pseudomonadota</taxon>
        <taxon>Alphaproteobacteria</taxon>
        <taxon>Hyphomicrobiales</taxon>
        <taxon>Phyllobacteriaceae</taxon>
        <taxon>Mesorhizobium</taxon>
    </lineage>
</organism>
<dbReference type="EC" id="4.1.1.11" evidence="1"/>
<dbReference type="EMBL" id="BA000013">
    <property type="protein sequence ID" value="BAB54499.1"/>
    <property type="molecule type" value="Genomic_DNA"/>
</dbReference>
<dbReference type="SMR" id="Q982G0"/>
<dbReference type="KEGG" id="mlo:mll9093"/>
<dbReference type="HOGENOM" id="CLU_115305_1_0_5"/>
<dbReference type="UniPathway" id="UPA00028">
    <property type="reaction ID" value="UER00002"/>
</dbReference>
<dbReference type="Proteomes" id="UP000000552">
    <property type="component" value="Plasmid pMLa"/>
</dbReference>
<dbReference type="GO" id="GO:0005829">
    <property type="term" value="C:cytosol"/>
    <property type="evidence" value="ECO:0007669"/>
    <property type="project" value="TreeGrafter"/>
</dbReference>
<dbReference type="GO" id="GO:0004068">
    <property type="term" value="F:aspartate 1-decarboxylase activity"/>
    <property type="evidence" value="ECO:0007669"/>
    <property type="project" value="UniProtKB-UniRule"/>
</dbReference>
<dbReference type="GO" id="GO:0006523">
    <property type="term" value="P:alanine biosynthetic process"/>
    <property type="evidence" value="ECO:0007669"/>
    <property type="project" value="InterPro"/>
</dbReference>
<dbReference type="GO" id="GO:0015940">
    <property type="term" value="P:pantothenate biosynthetic process"/>
    <property type="evidence" value="ECO:0007669"/>
    <property type="project" value="UniProtKB-UniRule"/>
</dbReference>
<dbReference type="CDD" id="cd06919">
    <property type="entry name" value="Asp_decarbox"/>
    <property type="match status" value="1"/>
</dbReference>
<dbReference type="Gene3D" id="2.40.40.20">
    <property type="match status" value="1"/>
</dbReference>
<dbReference type="HAMAP" id="MF_00446">
    <property type="entry name" value="PanD"/>
    <property type="match status" value="1"/>
</dbReference>
<dbReference type="InterPro" id="IPR009010">
    <property type="entry name" value="Asp_de-COase-like_dom_sf"/>
</dbReference>
<dbReference type="InterPro" id="IPR003190">
    <property type="entry name" value="Asp_decarbox"/>
</dbReference>
<dbReference type="NCBIfam" id="TIGR00223">
    <property type="entry name" value="panD"/>
    <property type="match status" value="1"/>
</dbReference>
<dbReference type="PANTHER" id="PTHR21012">
    <property type="entry name" value="ASPARTATE 1-DECARBOXYLASE"/>
    <property type="match status" value="1"/>
</dbReference>
<dbReference type="PANTHER" id="PTHR21012:SF0">
    <property type="entry name" value="ASPARTATE 1-DECARBOXYLASE"/>
    <property type="match status" value="1"/>
</dbReference>
<dbReference type="Pfam" id="PF02261">
    <property type="entry name" value="Asp_decarbox"/>
    <property type="match status" value="1"/>
</dbReference>
<dbReference type="SUPFAM" id="SSF50692">
    <property type="entry name" value="ADC-like"/>
    <property type="match status" value="1"/>
</dbReference>